<reference key="1">
    <citation type="journal article" date="2002" name="Proc. Natl. Acad. Sci. U.S.A.">
        <title>The genome sequence of Bifidobacterium longum reflects its adaptation to the human gastrointestinal tract.</title>
        <authorList>
            <person name="Schell M.A."/>
            <person name="Karmirantzou M."/>
            <person name="Snel B."/>
            <person name="Vilanova D."/>
            <person name="Berger B."/>
            <person name="Pessi G."/>
            <person name="Zwahlen M.-C."/>
            <person name="Desiere F."/>
            <person name="Bork P."/>
            <person name="Delley M."/>
            <person name="Pridmore R.D."/>
            <person name="Arigoni F."/>
        </authorList>
    </citation>
    <scope>NUCLEOTIDE SEQUENCE [LARGE SCALE GENOMIC DNA]</scope>
    <source>
        <strain>NCC 2705</strain>
    </source>
</reference>
<dbReference type="EC" id="6.1.1.15" evidence="1"/>
<dbReference type="EMBL" id="AE014295">
    <property type="protein sequence ID" value="AAN25512.1"/>
    <property type="molecule type" value="Genomic_DNA"/>
</dbReference>
<dbReference type="RefSeq" id="NP_696876.1">
    <property type="nucleotide sequence ID" value="NC_004307.2"/>
</dbReference>
<dbReference type="SMR" id="Q8G3N0"/>
<dbReference type="STRING" id="206672.BL1728"/>
<dbReference type="EnsemblBacteria" id="AAN25512">
    <property type="protein sequence ID" value="AAN25512"/>
    <property type="gene ID" value="BL1728"/>
</dbReference>
<dbReference type="KEGG" id="blo:BL1728"/>
<dbReference type="PATRIC" id="fig|206672.9.peg.1783"/>
<dbReference type="HOGENOM" id="CLU_016739_0_0_11"/>
<dbReference type="OrthoDB" id="9809052at2"/>
<dbReference type="PhylomeDB" id="Q8G3N0"/>
<dbReference type="Proteomes" id="UP000000439">
    <property type="component" value="Chromosome"/>
</dbReference>
<dbReference type="GO" id="GO:0005829">
    <property type="term" value="C:cytosol"/>
    <property type="evidence" value="ECO:0007669"/>
    <property type="project" value="TreeGrafter"/>
</dbReference>
<dbReference type="GO" id="GO:0002161">
    <property type="term" value="F:aminoacyl-tRNA deacylase activity"/>
    <property type="evidence" value="ECO:0007669"/>
    <property type="project" value="InterPro"/>
</dbReference>
<dbReference type="GO" id="GO:0005524">
    <property type="term" value="F:ATP binding"/>
    <property type="evidence" value="ECO:0007669"/>
    <property type="project" value="UniProtKB-UniRule"/>
</dbReference>
<dbReference type="GO" id="GO:0004827">
    <property type="term" value="F:proline-tRNA ligase activity"/>
    <property type="evidence" value="ECO:0007669"/>
    <property type="project" value="UniProtKB-UniRule"/>
</dbReference>
<dbReference type="GO" id="GO:0006433">
    <property type="term" value="P:prolyl-tRNA aminoacylation"/>
    <property type="evidence" value="ECO:0007669"/>
    <property type="project" value="UniProtKB-UniRule"/>
</dbReference>
<dbReference type="CDD" id="cd00861">
    <property type="entry name" value="ProRS_anticodon_short"/>
    <property type="match status" value="1"/>
</dbReference>
<dbReference type="CDD" id="cd00779">
    <property type="entry name" value="ProRS_core_prok"/>
    <property type="match status" value="1"/>
</dbReference>
<dbReference type="Gene3D" id="3.40.50.800">
    <property type="entry name" value="Anticodon-binding domain"/>
    <property type="match status" value="1"/>
</dbReference>
<dbReference type="Gene3D" id="3.30.930.10">
    <property type="entry name" value="Bira Bifunctional Protein, Domain 2"/>
    <property type="match status" value="2"/>
</dbReference>
<dbReference type="Gene3D" id="3.90.960.10">
    <property type="entry name" value="YbaK/aminoacyl-tRNA synthetase-associated domain"/>
    <property type="match status" value="1"/>
</dbReference>
<dbReference type="HAMAP" id="MF_01569">
    <property type="entry name" value="Pro_tRNA_synth_type1"/>
    <property type="match status" value="1"/>
</dbReference>
<dbReference type="InterPro" id="IPR002314">
    <property type="entry name" value="aa-tRNA-synt_IIb"/>
</dbReference>
<dbReference type="InterPro" id="IPR006195">
    <property type="entry name" value="aa-tRNA-synth_II"/>
</dbReference>
<dbReference type="InterPro" id="IPR045864">
    <property type="entry name" value="aa-tRNA-synth_II/BPL/LPL"/>
</dbReference>
<dbReference type="InterPro" id="IPR004154">
    <property type="entry name" value="Anticodon-bd"/>
</dbReference>
<dbReference type="InterPro" id="IPR036621">
    <property type="entry name" value="Anticodon-bd_dom_sf"/>
</dbReference>
<dbReference type="InterPro" id="IPR002316">
    <property type="entry name" value="Pro-tRNA-ligase_IIa"/>
</dbReference>
<dbReference type="InterPro" id="IPR004500">
    <property type="entry name" value="Pro-tRNA-synth_IIa_bac-type"/>
</dbReference>
<dbReference type="InterPro" id="IPR023717">
    <property type="entry name" value="Pro-tRNA-Synthase_IIa_type1"/>
</dbReference>
<dbReference type="InterPro" id="IPR050062">
    <property type="entry name" value="Pro-tRNA_synthetase"/>
</dbReference>
<dbReference type="InterPro" id="IPR044140">
    <property type="entry name" value="ProRS_anticodon_short"/>
</dbReference>
<dbReference type="InterPro" id="IPR033730">
    <property type="entry name" value="ProRS_core_prok"/>
</dbReference>
<dbReference type="InterPro" id="IPR036754">
    <property type="entry name" value="YbaK/aa-tRNA-synt-asso_dom_sf"/>
</dbReference>
<dbReference type="InterPro" id="IPR007214">
    <property type="entry name" value="YbaK/aa-tRNA-synth-assoc-dom"/>
</dbReference>
<dbReference type="NCBIfam" id="NF006625">
    <property type="entry name" value="PRK09194.1"/>
    <property type="match status" value="1"/>
</dbReference>
<dbReference type="NCBIfam" id="TIGR00409">
    <property type="entry name" value="proS_fam_II"/>
    <property type="match status" value="1"/>
</dbReference>
<dbReference type="PANTHER" id="PTHR42753">
    <property type="entry name" value="MITOCHONDRIAL RIBOSOME PROTEIN L39/PROLYL-TRNA LIGASE FAMILY MEMBER"/>
    <property type="match status" value="1"/>
</dbReference>
<dbReference type="PANTHER" id="PTHR42753:SF2">
    <property type="entry name" value="PROLINE--TRNA LIGASE"/>
    <property type="match status" value="1"/>
</dbReference>
<dbReference type="Pfam" id="PF03129">
    <property type="entry name" value="HGTP_anticodon"/>
    <property type="match status" value="1"/>
</dbReference>
<dbReference type="Pfam" id="PF00587">
    <property type="entry name" value="tRNA-synt_2b"/>
    <property type="match status" value="1"/>
</dbReference>
<dbReference type="Pfam" id="PF04073">
    <property type="entry name" value="tRNA_edit"/>
    <property type="match status" value="1"/>
</dbReference>
<dbReference type="PRINTS" id="PR01046">
    <property type="entry name" value="TRNASYNTHPRO"/>
</dbReference>
<dbReference type="SUPFAM" id="SSF52954">
    <property type="entry name" value="Class II aaRS ABD-related"/>
    <property type="match status" value="1"/>
</dbReference>
<dbReference type="SUPFAM" id="SSF55681">
    <property type="entry name" value="Class II aaRS and biotin synthetases"/>
    <property type="match status" value="1"/>
</dbReference>
<dbReference type="SUPFAM" id="SSF55826">
    <property type="entry name" value="YbaK/ProRS associated domain"/>
    <property type="match status" value="1"/>
</dbReference>
<dbReference type="PROSITE" id="PS50862">
    <property type="entry name" value="AA_TRNA_LIGASE_II"/>
    <property type="match status" value="1"/>
</dbReference>
<proteinExistence type="inferred from homology"/>
<comment type="function">
    <text evidence="1">Catalyzes the attachment of proline to tRNA(Pro) in a two-step reaction: proline is first activated by ATP to form Pro-AMP and then transferred to the acceptor end of tRNA(Pro). As ProRS can inadvertently accommodate and process non-cognate amino acids such as alanine and cysteine, to avoid such errors it has two additional distinct editing activities against alanine. One activity is designated as 'pretransfer' editing and involves the tRNA(Pro)-independent hydrolysis of activated Ala-AMP. The other activity is designated 'posttransfer' editing and involves deacylation of mischarged Ala-tRNA(Pro). The misacylated Cys-tRNA(Pro) is not edited by ProRS.</text>
</comment>
<comment type="catalytic activity">
    <reaction evidence="1">
        <text>tRNA(Pro) + L-proline + ATP = L-prolyl-tRNA(Pro) + AMP + diphosphate</text>
        <dbReference type="Rhea" id="RHEA:14305"/>
        <dbReference type="Rhea" id="RHEA-COMP:9700"/>
        <dbReference type="Rhea" id="RHEA-COMP:9702"/>
        <dbReference type="ChEBI" id="CHEBI:30616"/>
        <dbReference type="ChEBI" id="CHEBI:33019"/>
        <dbReference type="ChEBI" id="CHEBI:60039"/>
        <dbReference type="ChEBI" id="CHEBI:78442"/>
        <dbReference type="ChEBI" id="CHEBI:78532"/>
        <dbReference type="ChEBI" id="CHEBI:456215"/>
        <dbReference type="EC" id="6.1.1.15"/>
    </reaction>
</comment>
<comment type="subunit">
    <text evidence="1">Homodimer.</text>
</comment>
<comment type="subcellular location">
    <subcellularLocation>
        <location evidence="1">Cytoplasm</location>
    </subcellularLocation>
</comment>
<comment type="domain">
    <text evidence="1">Consists of three domains: the N-terminal catalytic domain, the editing domain and the C-terminal anticodon-binding domain.</text>
</comment>
<comment type="similarity">
    <text evidence="1">Belongs to the class-II aminoacyl-tRNA synthetase family. ProS type 1 subfamily.</text>
</comment>
<sequence>MSTMFLRTLREDPADADVDSAKLLQRAGYIRKAAPGIWTWLPLGLRVLNKIEAIIREEINGIGAQEVHFPALLPREPYEATHRWEEYGDNIFRLKDRHEADYLLAPTHEEMFTLLVKDMYSSYKDLPVTLYQIQTKYRDEFRPRAGLIRGREFVMKDAYSFTIDEEGMRKAYYDERGAYERIFQRLDLKYVPVFAMSGPMGGSASEEFLAPMPIGEDTFALAPSGKAWNVEALSTPELPEIDASTTPAASKEATPDAKTIDNMIERANADHPRTDGREWQASDILKNVVITVKHPEDEEHDEPWREVIVVGVPGDRTVDMKRLEAQFAPAELEEATEEDLKQHPELVPGYIGPMVLGPQAEAAGVKNPVRYLIDAHVVKGSAWFTGADENEVDYYNLVYGRDFKVDGVVEAVEVRHGDMSPDGSGPLSFERGVEIGQVFQLGLKYSKALDLKVLDQNGKAVPVWMGCYGIGVSRVLACIAETHHDEAGLAWPSVIAPAAVHVVATGKDAVAFEGAEKLVAELEAKGLEVIYDDRKKVSPGVKFKDAELIGVPLVAVVGRDYVNDGTIELRDRNGENKVAVPAAEAADALAERFAALS</sequence>
<feature type="chain" id="PRO_0000248651" description="Proline--tRNA ligase">
    <location>
        <begin position="1"/>
        <end position="597"/>
    </location>
</feature>
<gene>
    <name evidence="1" type="primary">proS</name>
    <name type="ordered locus">BL1728</name>
</gene>
<name>SYP_BIFLO</name>
<accession>Q8G3N0</accession>
<organism>
    <name type="scientific">Bifidobacterium longum (strain NCC 2705)</name>
    <dbReference type="NCBI Taxonomy" id="206672"/>
    <lineage>
        <taxon>Bacteria</taxon>
        <taxon>Bacillati</taxon>
        <taxon>Actinomycetota</taxon>
        <taxon>Actinomycetes</taxon>
        <taxon>Bifidobacteriales</taxon>
        <taxon>Bifidobacteriaceae</taxon>
        <taxon>Bifidobacterium</taxon>
    </lineage>
</organism>
<protein>
    <recommendedName>
        <fullName evidence="1">Proline--tRNA ligase</fullName>
        <ecNumber evidence="1">6.1.1.15</ecNumber>
    </recommendedName>
    <alternativeName>
        <fullName evidence="1">Prolyl-tRNA synthetase</fullName>
        <shortName evidence="1">ProRS</shortName>
    </alternativeName>
</protein>
<evidence type="ECO:0000255" key="1">
    <source>
        <dbReference type="HAMAP-Rule" id="MF_01569"/>
    </source>
</evidence>
<keyword id="KW-0030">Aminoacyl-tRNA synthetase</keyword>
<keyword id="KW-0067">ATP-binding</keyword>
<keyword id="KW-0963">Cytoplasm</keyword>
<keyword id="KW-0436">Ligase</keyword>
<keyword id="KW-0547">Nucleotide-binding</keyword>
<keyword id="KW-0648">Protein biosynthesis</keyword>
<keyword id="KW-1185">Reference proteome</keyword>